<gene>
    <name type="primary">MT-CO3</name>
    <name type="synonym">COIII</name>
    <name type="synonym">COXIII</name>
    <name type="synonym">MTCO3</name>
</gene>
<geneLocation type="mitochondrion"/>
<proteinExistence type="inferred from homology"/>
<sequence>MAHQAHAYHMVDPSPWPLTGAVAALLMTSGLAVWFHFHSMYLLYLGLTLLLLTMVQWWRDIIREGTFQGHHTPPVQKGLRYGMILFITSEVFFFLGFFWAFYHSSLAPTPELGGCWPPTGIYPLDPFEVPLLNTAVLLASGVTVTWAHHSLMEGNRKEAIQALTLTVLLGFYFTALQAMEYYEAPFTIADGVYGSTFFVATGFHGLHVIIGSTFLMVCLLRQIQYHFTSEHHFGFERAAWYWHFVDVVWLFLYVSIYWWGS</sequence>
<keyword id="KW-0472">Membrane</keyword>
<keyword id="KW-0496">Mitochondrion</keyword>
<keyword id="KW-0999">Mitochondrion inner membrane</keyword>
<keyword id="KW-1278">Translocase</keyword>
<keyword id="KW-0812">Transmembrane</keyword>
<keyword id="KW-1133">Transmembrane helix</keyword>
<dbReference type="EC" id="7.1.1.9"/>
<dbReference type="EMBL" id="Y18134">
    <property type="protein sequence ID" value="CAA77055.1"/>
    <property type="molecule type" value="Genomic_DNA"/>
</dbReference>
<dbReference type="PIR" id="T11540">
    <property type="entry name" value="T11540"/>
</dbReference>
<dbReference type="SMR" id="Q9ZZ48"/>
<dbReference type="CTD" id="4514"/>
<dbReference type="GO" id="GO:0005743">
    <property type="term" value="C:mitochondrial inner membrane"/>
    <property type="evidence" value="ECO:0007669"/>
    <property type="project" value="UniProtKB-SubCell"/>
</dbReference>
<dbReference type="GO" id="GO:0045277">
    <property type="term" value="C:respiratory chain complex IV"/>
    <property type="evidence" value="ECO:0000250"/>
    <property type="project" value="UniProtKB"/>
</dbReference>
<dbReference type="GO" id="GO:0004129">
    <property type="term" value="F:cytochrome-c oxidase activity"/>
    <property type="evidence" value="ECO:0007669"/>
    <property type="project" value="UniProtKB-EC"/>
</dbReference>
<dbReference type="GO" id="GO:0006123">
    <property type="term" value="P:mitochondrial electron transport, cytochrome c to oxygen"/>
    <property type="evidence" value="ECO:0007669"/>
    <property type="project" value="TreeGrafter"/>
</dbReference>
<dbReference type="CDD" id="cd01665">
    <property type="entry name" value="Cyt_c_Oxidase_III"/>
    <property type="match status" value="1"/>
</dbReference>
<dbReference type="FunFam" id="1.10.287.70:FF:000048">
    <property type="entry name" value="Cytochrome c oxidase subunit 3"/>
    <property type="match status" value="1"/>
</dbReference>
<dbReference type="FunFam" id="1.20.120.80:FF:000002">
    <property type="entry name" value="Cytochrome c oxidase subunit 3"/>
    <property type="match status" value="1"/>
</dbReference>
<dbReference type="Gene3D" id="1.10.287.70">
    <property type="match status" value="1"/>
</dbReference>
<dbReference type="Gene3D" id="1.20.120.80">
    <property type="entry name" value="Cytochrome c oxidase, subunit III, four-helix bundle"/>
    <property type="match status" value="1"/>
</dbReference>
<dbReference type="InterPro" id="IPR024791">
    <property type="entry name" value="Cyt_c/ubiquinol_Oxase_su3"/>
</dbReference>
<dbReference type="InterPro" id="IPR033945">
    <property type="entry name" value="Cyt_c_oxase_su3_dom"/>
</dbReference>
<dbReference type="InterPro" id="IPR000298">
    <property type="entry name" value="Cyt_c_oxidase-like_su3"/>
</dbReference>
<dbReference type="InterPro" id="IPR035973">
    <property type="entry name" value="Cyt_c_oxidase_su3-like_sf"/>
</dbReference>
<dbReference type="InterPro" id="IPR013833">
    <property type="entry name" value="Cyt_c_oxidase_su3_a-hlx"/>
</dbReference>
<dbReference type="PANTHER" id="PTHR11403:SF7">
    <property type="entry name" value="CYTOCHROME C OXIDASE SUBUNIT 3"/>
    <property type="match status" value="1"/>
</dbReference>
<dbReference type="PANTHER" id="PTHR11403">
    <property type="entry name" value="CYTOCHROME C OXIDASE SUBUNIT III"/>
    <property type="match status" value="1"/>
</dbReference>
<dbReference type="Pfam" id="PF00510">
    <property type="entry name" value="COX3"/>
    <property type="match status" value="1"/>
</dbReference>
<dbReference type="SUPFAM" id="SSF81452">
    <property type="entry name" value="Cytochrome c oxidase subunit III-like"/>
    <property type="match status" value="1"/>
</dbReference>
<dbReference type="PROSITE" id="PS50253">
    <property type="entry name" value="COX3"/>
    <property type="match status" value="1"/>
</dbReference>
<protein>
    <recommendedName>
        <fullName>Cytochrome c oxidase subunit 3</fullName>
        <ecNumber>7.1.1.9</ecNumber>
    </recommendedName>
    <alternativeName>
        <fullName>Cytochrome c oxidase polypeptide III</fullName>
    </alternativeName>
</protein>
<accession>Q9ZZ48</accession>
<organism>
    <name type="scientific">Squalus acanthias</name>
    <name type="common">Spiny dogfish</name>
    <dbReference type="NCBI Taxonomy" id="7797"/>
    <lineage>
        <taxon>Eukaryota</taxon>
        <taxon>Metazoa</taxon>
        <taxon>Chordata</taxon>
        <taxon>Craniata</taxon>
        <taxon>Vertebrata</taxon>
        <taxon>Chondrichthyes</taxon>
        <taxon>Elasmobranchii</taxon>
        <taxon>Squalomorphii</taxon>
        <taxon>Squaliformes</taxon>
        <taxon>Squalidae</taxon>
        <taxon>Squalus</taxon>
    </lineage>
</organism>
<feature type="chain" id="PRO_0000183856" description="Cytochrome c oxidase subunit 3">
    <location>
        <begin position="1"/>
        <end position="261"/>
    </location>
</feature>
<feature type="topological domain" description="Mitochondrial matrix" evidence="1">
    <location>
        <begin position="1"/>
        <end position="15"/>
    </location>
</feature>
<feature type="transmembrane region" description="Helical; Name=I" evidence="1">
    <location>
        <begin position="16"/>
        <end position="34"/>
    </location>
</feature>
<feature type="topological domain" description="Mitochondrial intermembrane" evidence="1">
    <location>
        <begin position="35"/>
        <end position="40"/>
    </location>
</feature>
<feature type="transmembrane region" description="Helical; Name=II" evidence="1">
    <location>
        <begin position="41"/>
        <end position="66"/>
    </location>
</feature>
<feature type="topological domain" description="Mitochondrial matrix" evidence="1">
    <location>
        <begin position="67"/>
        <end position="72"/>
    </location>
</feature>
<feature type="transmembrane region" description="Helical; Name=III" evidence="1">
    <location>
        <begin position="73"/>
        <end position="105"/>
    </location>
</feature>
<feature type="topological domain" description="Mitochondrial intermembrane" evidence="1">
    <location>
        <begin position="106"/>
        <end position="128"/>
    </location>
</feature>
<feature type="transmembrane region" description="Helical; Name=IV" evidence="1">
    <location>
        <begin position="129"/>
        <end position="152"/>
    </location>
</feature>
<feature type="topological domain" description="Mitochondrial matrix" evidence="1">
    <location>
        <begin position="153"/>
        <end position="155"/>
    </location>
</feature>
<feature type="transmembrane region" description="Helical; Name=V" evidence="1">
    <location>
        <begin position="156"/>
        <end position="183"/>
    </location>
</feature>
<feature type="topological domain" description="Mitochondrial intermembrane" evidence="1">
    <location>
        <begin position="184"/>
        <end position="190"/>
    </location>
</feature>
<feature type="transmembrane region" description="Helical; Name=VI" evidence="1">
    <location>
        <begin position="191"/>
        <end position="223"/>
    </location>
</feature>
<feature type="topological domain" description="Mitochondrial matrix" evidence="1">
    <location>
        <begin position="224"/>
        <end position="232"/>
    </location>
</feature>
<feature type="transmembrane region" description="Helical; Name=VII" evidence="1">
    <location>
        <begin position="233"/>
        <end position="256"/>
    </location>
</feature>
<feature type="topological domain" description="Mitochondrial intermembrane" evidence="1">
    <location>
        <begin position="257"/>
        <end position="261"/>
    </location>
</feature>
<evidence type="ECO:0000250" key="1">
    <source>
        <dbReference type="UniProtKB" id="P00415"/>
    </source>
</evidence>
<evidence type="ECO:0000250" key="2">
    <source>
        <dbReference type="UniProtKB" id="P00420"/>
    </source>
</evidence>
<evidence type="ECO:0000305" key="3"/>
<reference key="1">
    <citation type="journal article" date="1999" name="J. Mol. Evol.">
        <title>Phylogenetic studies of complete mitochondrial DNA molecules place cartilaginous fishes within the tree of bony fishes.</title>
        <authorList>
            <person name="Rasmussen A.S."/>
            <person name="Arnason U."/>
        </authorList>
    </citation>
    <scope>NUCLEOTIDE SEQUENCE [GENOMIC DNA]</scope>
</reference>
<name>COX3_SQUAC</name>
<comment type="function">
    <text evidence="2">Component of the cytochrome c oxidase, the last enzyme in the mitochondrial electron transport chain which drives oxidative phosphorylation. The respiratory chain contains 3 multisubunit complexes succinate dehydrogenase (complex II, CII), ubiquinol-cytochrome c oxidoreductase (cytochrome b-c1 complex, complex III, CIII) and cytochrome c oxidase (complex IV, CIV), that cooperate to transfer electrons derived from NADH and succinate to molecular oxygen, creating an electrochemical gradient over the inner membrane that drives transmembrane transport and the ATP synthase. Cytochrome c oxidase is the component of the respiratory chain that catalyzes the reduction of oxygen to water. Electrons originating from reduced cytochrome c in the intermembrane space (IMS) are transferred via the dinuclear copper A center (CU(A)) of subunit 2 and heme A of subunit 1 to the active site in subunit 1, a binuclear center (BNC) formed by heme A3 and copper B (CU(B)). The BNC reduces molecular oxygen to 2 water molecules using 4 electrons from cytochrome c in the IMS and 4 protons from the mitochondrial matrix.</text>
</comment>
<comment type="catalytic activity">
    <reaction evidence="2">
        <text>4 Fe(II)-[cytochrome c] + O2 + 8 H(+)(in) = 4 Fe(III)-[cytochrome c] + 2 H2O + 4 H(+)(out)</text>
        <dbReference type="Rhea" id="RHEA:11436"/>
        <dbReference type="Rhea" id="RHEA-COMP:10350"/>
        <dbReference type="Rhea" id="RHEA-COMP:14399"/>
        <dbReference type="ChEBI" id="CHEBI:15377"/>
        <dbReference type="ChEBI" id="CHEBI:15378"/>
        <dbReference type="ChEBI" id="CHEBI:15379"/>
        <dbReference type="ChEBI" id="CHEBI:29033"/>
        <dbReference type="ChEBI" id="CHEBI:29034"/>
        <dbReference type="EC" id="7.1.1.9"/>
    </reaction>
    <physiologicalReaction direction="left-to-right" evidence="2">
        <dbReference type="Rhea" id="RHEA:11437"/>
    </physiologicalReaction>
</comment>
<comment type="subunit">
    <text evidence="1">Component of the cytochrome c oxidase (complex IV, CIV), a multisubunit enzyme composed of 14 subunits. The complex is composed of a catalytic core of 3 subunits MT-CO1, MT-CO2 and MT-CO3, encoded in the mitochondrial DNA, and 11 supernumerary subunits COX4I, COX5A, COX5B, COX6A, COX6B, COX6C, COX7A, COX7B, COX7C, COX8 and NDUFA4, which are encoded in the nuclear genome. The complex exists as a monomer or a dimer and forms supercomplexes (SCs) in the inner mitochondrial membrane with NADH-ubiquinone oxidoreductase (complex I, CI) and ubiquinol-cytochrome c oxidoreductase (cytochrome b-c1 complex, complex III, CIII), resulting in different assemblies (supercomplex SCI(1)III(2)IV(1) and megacomplex MCI(2)III(2)IV(2)).</text>
</comment>
<comment type="subcellular location">
    <subcellularLocation>
        <location evidence="1">Mitochondrion inner membrane</location>
        <topology evidence="1">Multi-pass membrane protein</topology>
    </subcellularLocation>
</comment>
<comment type="similarity">
    <text evidence="3">Belongs to the cytochrome c oxidase subunit 3 family.</text>
</comment>